<sequence>MSQVKLNLIAAACDNMGIGVNGALPWRLKKEMAYFTTMTSKVSEPTKVNAVIMGRRTWDCIPDKYRPLQDRVNIVLTHNVDSVKENVPEGVMVFPGLDEAIKYIEGREDIESTWVIGGSSIYRAAMTHPNCGKIYLTEIQKSFDCDTFFPNIDKQQFHLVDEEQIPGEKQVEGNISYYFRVYKKL</sequence>
<dbReference type="EC" id="1.5.1.3"/>
<dbReference type="EMBL" id="AF104106">
    <property type="protein sequence ID" value="AAF04459.1"/>
    <property type="molecule type" value="mRNA"/>
</dbReference>
<dbReference type="SMR" id="Q9U8B8"/>
<dbReference type="UniPathway" id="UPA00077">
    <property type="reaction ID" value="UER00158"/>
</dbReference>
<dbReference type="GO" id="GO:0005739">
    <property type="term" value="C:mitochondrion"/>
    <property type="evidence" value="ECO:0007669"/>
    <property type="project" value="TreeGrafter"/>
</dbReference>
<dbReference type="GO" id="GO:0004146">
    <property type="term" value="F:dihydrofolate reductase activity"/>
    <property type="evidence" value="ECO:0007669"/>
    <property type="project" value="UniProtKB-EC"/>
</dbReference>
<dbReference type="GO" id="GO:0050661">
    <property type="term" value="F:NADP binding"/>
    <property type="evidence" value="ECO:0007669"/>
    <property type="project" value="InterPro"/>
</dbReference>
<dbReference type="GO" id="GO:0046452">
    <property type="term" value="P:dihydrofolate metabolic process"/>
    <property type="evidence" value="ECO:0007669"/>
    <property type="project" value="TreeGrafter"/>
</dbReference>
<dbReference type="GO" id="GO:0046655">
    <property type="term" value="P:folic acid metabolic process"/>
    <property type="evidence" value="ECO:0007669"/>
    <property type="project" value="TreeGrafter"/>
</dbReference>
<dbReference type="GO" id="GO:0006730">
    <property type="term" value="P:one-carbon metabolic process"/>
    <property type="evidence" value="ECO:0007669"/>
    <property type="project" value="UniProtKB-KW"/>
</dbReference>
<dbReference type="GO" id="GO:0046654">
    <property type="term" value="P:tetrahydrofolate biosynthetic process"/>
    <property type="evidence" value="ECO:0007669"/>
    <property type="project" value="UniProtKB-UniPathway"/>
</dbReference>
<dbReference type="CDD" id="cd00209">
    <property type="entry name" value="DHFR"/>
    <property type="match status" value="1"/>
</dbReference>
<dbReference type="FunFam" id="3.40.430.10:FF:000002">
    <property type="entry name" value="Dihydrofolate reductase"/>
    <property type="match status" value="1"/>
</dbReference>
<dbReference type="Gene3D" id="3.40.430.10">
    <property type="entry name" value="Dihydrofolate Reductase, subunit A"/>
    <property type="match status" value="1"/>
</dbReference>
<dbReference type="InterPro" id="IPR012259">
    <property type="entry name" value="DHFR"/>
</dbReference>
<dbReference type="InterPro" id="IPR024072">
    <property type="entry name" value="DHFR-like_dom_sf"/>
</dbReference>
<dbReference type="InterPro" id="IPR017925">
    <property type="entry name" value="DHFR_CS"/>
</dbReference>
<dbReference type="InterPro" id="IPR001796">
    <property type="entry name" value="DHFR_dom"/>
</dbReference>
<dbReference type="PANTHER" id="PTHR48069">
    <property type="entry name" value="DIHYDROFOLATE REDUCTASE"/>
    <property type="match status" value="1"/>
</dbReference>
<dbReference type="PANTHER" id="PTHR48069:SF3">
    <property type="entry name" value="DIHYDROFOLATE REDUCTASE"/>
    <property type="match status" value="1"/>
</dbReference>
<dbReference type="Pfam" id="PF00186">
    <property type="entry name" value="DHFR_1"/>
    <property type="match status" value="1"/>
</dbReference>
<dbReference type="PRINTS" id="PR00070">
    <property type="entry name" value="DHFR"/>
</dbReference>
<dbReference type="SUPFAM" id="SSF53597">
    <property type="entry name" value="Dihydrofolate reductase-like"/>
    <property type="match status" value="1"/>
</dbReference>
<dbReference type="PROSITE" id="PS00075">
    <property type="entry name" value="DHFR_1"/>
    <property type="match status" value="1"/>
</dbReference>
<dbReference type="PROSITE" id="PS51330">
    <property type="entry name" value="DHFR_2"/>
    <property type="match status" value="1"/>
</dbReference>
<comment type="function">
    <text evidence="1">Key enzyme in folate metabolism. Catalyzes an essential reaction for de novo glycine and purine synthesis, and for DNA precursor synthesis (By similarity).</text>
</comment>
<comment type="catalytic activity">
    <reaction evidence="2 3">
        <text>(6S)-5,6,7,8-tetrahydrofolate + NADP(+) = 7,8-dihydrofolate + NADPH + H(+)</text>
        <dbReference type="Rhea" id="RHEA:15009"/>
        <dbReference type="ChEBI" id="CHEBI:15378"/>
        <dbReference type="ChEBI" id="CHEBI:57451"/>
        <dbReference type="ChEBI" id="CHEBI:57453"/>
        <dbReference type="ChEBI" id="CHEBI:57783"/>
        <dbReference type="ChEBI" id="CHEBI:58349"/>
        <dbReference type="EC" id="1.5.1.3"/>
    </reaction>
</comment>
<comment type="activity regulation">
    <text evidence="4">Activated by dithiothreitol and p-chloromercuribenzoate. Inhibited by trimethoprim, methotrexate, sodium tetrathionate and hydroxymercuribenzoate.</text>
</comment>
<comment type="pathway">
    <text>Cofactor biosynthesis; tetrahydrofolate biosynthesis; 5,6,7,8-tetrahydrofolate from 7,8-dihydrofolate: step 1/1.</text>
</comment>
<comment type="similarity">
    <text evidence="5">Belongs to the dihydrofolate reductase family.</text>
</comment>
<protein>
    <recommendedName>
        <fullName>Dihydrofolate reductase</fullName>
        <ecNumber>1.5.1.3</ecNumber>
    </recommendedName>
</protein>
<reference evidence="5" key="1">
    <citation type="journal article" date="2000" name="Eur. J. Biochem.">
        <title>Tobacco budworm dihydrofolate reductase is a promising target for insecticide discovery.</title>
        <authorList>
            <person name="Walker V.K."/>
            <person name="Tyshenko M.G."/>
            <person name="Kuiper M.J."/>
            <person name="Dargar R.V."/>
            <person name="Yuhas D.A."/>
            <person name="Cruickshank P.A."/>
            <person name="Chaguturu R."/>
        </authorList>
    </citation>
    <scope>NUCLEOTIDE SEQUENCE [MRNA]</scope>
    <scope>PROTEIN SEQUENCE OF 3-22; 32-38; 143-149; 153-159 AND 170-175</scope>
    <scope>ACTIVITY REGULATION</scope>
    <source>
        <tissue>Larva</tissue>
    </source>
</reference>
<feature type="chain" id="PRO_0000186371" description="Dihydrofolate reductase">
    <location>
        <begin position="1"/>
        <end position="185"/>
    </location>
</feature>
<feature type="domain" description="DHFR" evidence="3">
    <location>
        <begin position="5"/>
        <end position="184"/>
    </location>
</feature>
<feature type="binding site" evidence="1">
    <location>
        <position position="11"/>
    </location>
    <ligand>
        <name>NADP(+)</name>
        <dbReference type="ChEBI" id="CHEBI:58349"/>
    </ligand>
</feature>
<feature type="binding site" evidence="1">
    <location>
        <begin position="17"/>
        <end position="23"/>
    </location>
    <ligand>
        <name>NADP(+)</name>
        <dbReference type="ChEBI" id="CHEBI:58349"/>
    </ligand>
</feature>
<feature type="binding site" evidence="1">
    <location>
        <begin position="31"/>
        <end position="36"/>
    </location>
    <ligand>
        <name>substrate</name>
    </ligand>
</feature>
<feature type="binding site" evidence="1">
    <location>
        <begin position="55"/>
        <end position="57"/>
    </location>
    <ligand>
        <name>NADP(+)</name>
        <dbReference type="ChEBI" id="CHEBI:58349"/>
    </ligand>
</feature>
<feature type="binding site" evidence="1">
    <location>
        <position position="71"/>
    </location>
    <ligand>
        <name>substrate</name>
    </ligand>
</feature>
<feature type="binding site" evidence="1">
    <location>
        <begin position="77"/>
        <end position="79"/>
    </location>
    <ligand>
        <name>NADP(+)</name>
        <dbReference type="ChEBI" id="CHEBI:58349"/>
    </ligand>
</feature>
<feature type="binding site" evidence="1">
    <location>
        <begin position="117"/>
        <end position="124"/>
    </location>
    <ligand>
        <name>NADP(+)</name>
        <dbReference type="ChEBI" id="CHEBI:58349"/>
    </ligand>
</feature>
<feature type="sequence conflict" description="In Ref. 1; AA sequence." evidence="5" ref="1">
    <original>K</original>
    <variation>L</variation>
    <location>
        <position position="5"/>
    </location>
</feature>
<feature type="sequence conflict" description="In Ref. 1; AA sequence." evidence="5" ref="1">
    <original>N</original>
    <variation>D</variation>
    <location>
        <position position="7"/>
    </location>
</feature>
<feature type="sequence conflict" description="In Ref. 1; AA sequence." evidence="5" ref="1">
    <original>AAC</original>
    <variation>IFD</variation>
    <location>
        <begin position="11"/>
        <end position="13"/>
    </location>
</feature>
<feature type="sequence conflict" description="In Ref. 1; AA sequence." evidence="5" ref="1">
    <original>N</original>
    <variation>D</variation>
    <location>
        <position position="15"/>
    </location>
</feature>
<feature type="sequence conflict" description="In Ref. 1; AA sequence." evidence="5" ref="1">
    <original>N</original>
    <variation>D</variation>
    <location>
        <position position="21"/>
    </location>
</feature>
<feature type="sequence conflict" description="In Ref. 1; AA sequence." evidence="5" ref="1">
    <original>H</original>
    <variation>Q</variation>
    <location>
        <position position="158"/>
    </location>
</feature>
<keyword id="KW-0903">Direct protein sequencing</keyword>
<keyword id="KW-0521">NADP</keyword>
<keyword id="KW-0554">One-carbon metabolism</keyword>
<keyword id="KW-0560">Oxidoreductase</keyword>
<proteinExistence type="evidence at protein level"/>
<organism evidence="6">
    <name type="scientific">Heliothis virescens</name>
    <name type="common">Tobacco budworm moth</name>
    <dbReference type="NCBI Taxonomy" id="7102"/>
    <lineage>
        <taxon>Eukaryota</taxon>
        <taxon>Metazoa</taxon>
        <taxon>Ecdysozoa</taxon>
        <taxon>Arthropoda</taxon>
        <taxon>Hexapoda</taxon>
        <taxon>Insecta</taxon>
        <taxon>Pterygota</taxon>
        <taxon>Neoptera</taxon>
        <taxon>Endopterygota</taxon>
        <taxon>Lepidoptera</taxon>
        <taxon>Glossata</taxon>
        <taxon>Ditrysia</taxon>
        <taxon>Noctuoidea</taxon>
        <taxon>Noctuidae</taxon>
        <taxon>Heliothinae</taxon>
        <taxon>Heliothis</taxon>
    </lineage>
</organism>
<name>DYR_HELVI</name>
<evidence type="ECO:0000250" key="1"/>
<evidence type="ECO:0000250" key="2">
    <source>
        <dbReference type="UniProtKB" id="P28019"/>
    </source>
</evidence>
<evidence type="ECO:0000255" key="3">
    <source>
        <dbReference type="PROSITE-ProRule" id="PRU00660"/>
    </source>
</evidence>
<evidence type="ECO:0000269" key="4">
    <source>
    </source>
</evidence>
<evidence type="ECO:0000305" key="5"/>
<evidence type="ECO:0000312" key="6">
    <source>
        <dbReference type="EMBL" id="AAF04459.1"/>
    </source>
</evidence>
<accession>Q9U8B8</accession>
<gene>
    <name type="primary">DHFR</name>
</gene>